<comment type="function">
    <text evidence="2">GTP hydrolase that promotes the GTP-dependent binding of aminoacyl-tRNA to the A-site of ribosomes during protein biosynthesis.</text>
</comment>
<comment type="catalytic activity">
    <reaction evidence="2">
        <text>GTP + H2O = GDP + phosphate + H(+)</text>
        <dbReference type="Rhea" id="RHEA:19669"/>
        <dbReference type="ChEBI" id="CHEBI:15377"/>
        <dbReference type="ChEBI" id="CHEBI:15378"/>
        <dbReference type="ChEBI" id="CHEBI:37565"/>
        <dbReference type="ChEBI" id="CHEBI:43474"/>
        <dbReference type="ChEBI" id="CHEBI:58189"/>
        <dbReference type="EC" id="3.6.5.3"/>
    </reaction>
    <physiologicalReaction direction="left-to-right" evidence="2">
        <dbReference type="Rhea" id="RHEA:19670"/>
    </physiologicalReaction>
</comment>
<comment type="subunit">
    <text evidence="2">Monomer.</text>
</comment>
<comment type="subcellular location">
    <subcellularLocation>
        <location evidence="2">Cytoplasm</location>
    </subcellularLocation>
</comment>
<comment type="similarity">
    <text evidence="2">Belongs to the TRAFAC class translation factor GTPase superfamily. Classic translation factor GTPase family. EF-Tu/EF-1A subfamily.</text>
</comment>
<feature type="chain" id="PRO_0000337313" description="Elongation factor Tu">
    <location>
        <begin position="1"/>
        <end position="396"/>
    </location>
</feature>
<feature type="domain" description="tr-type G">
    <location>
        <begin position="10"/>
        <end position="206"/>
    </location>
</feature>
<feature type="region of interest" description="G1" evidence="1">
    <location>
        <begin position="19"/>
        <end position="26"/>
    </location>
</feature>
<feature type="region of interest" description="G2" evidence="1">
    <location>
        <begin position="60"/>
        <end position="64"/>
    </location>
</feature>
<feature type="region of interest" description="G3" evidence="1">
    <location>
        <begin position="81"/>
        <end position="84"/>
    </location>
</feature>
<feature type="region of interest" description="G4" evidence="1">
    <location>
        <begin position="136"/>
        <end position="139"/>
    </location>
</feature>
<feature type="region of interest" description="G5" evidence="1">
    <location>
        <begin position="174"/>
        <end position="176"/>
    </location>
</feature>
<feature type="binding site" evidence="2">
    <location>
        <begin position="19"/>
        <end position="26"/>
    </location>
    <ligand>
        <name>GTP</name>
        <dbReference type="ChEBI" id="CHEBI:37565"/>
    </ligand>
</feature>
<feature type="binding site" evidence="2">
    <location>
        <position position="26"/>
    </location>
    <ligand>
        <name>Mg(2+)</name>
        <dbReference type="ChEBI" id="CHEBI:18420"/>
    </ligand>
</feature>
<feature type="binding site" evidence="2">
    <location>
        <begin position="81"/>
        <end position="85"/>
    </location>
    <ligand>
        <name>GTP</name>
        <dbReference type="ChEBI" id="CHEBI:37565"/>
    </ligand>
</feature>
<feature type="binding site" evidence="2">
    <location>
        <begin position="136"/>
        <end position="139"/>
    </location>
    <ligand>
        <name>GTP</name>
        <dbReference type="ChEBI" id="CHEBI:37565"/>
    </ligand>
</feature>
<name>EFTU_ANADE</name>
<evidence type="ECO:0000250" key="1"/>
<evidence type="ECO:0000255" key="2">
    <source>
        <dbReference type="HAMAP-Rule" id="MF_00118"/>
    </source>
</evidence>
<accession>Q2II78</accession>
<reference key="1">
    <citation type="submission" date="2006-01" db="EMBL/GenBank/DDBJ databases">
        <title>Complete sequence of Anaeromyxobacter dehalogenans 2CP-C.</title>
        <authorList>
            <person name="Copeland A."/>
            <person name="Lucas S."/>
            <person name="Lapidus A."/>
            <person name="Barry K."/>
            <person name="Detter J.C."/>
            <person name="Glavina T."/>
            <person name="Hammon N."/>
            <person name="Israni S."/>
            <person name="Pitluck S."/>
            <person name="Brettin T."/>
            <person name="Bruce D."/>
            <person name="Han C."/>
            <person name="Tapia R."/>
            <person name="Gilna P."/>
            <person name="Kiss H."/>
            <person name="Schmutz J."/>
            <person name="Larimer F."/>
            <person name="Land M."/>
            <person name="Kyrpides N."/>
            <person name="Anderson I."/>
            <person name="Sanford R.A."/>
            <person name="Ritalahti K.M."/>
            <person name="Thomas H.S."/>
            <person name="Kirby J.R."/>
            <person name="Zhulin I.B."/>
            <person name="Loeffler F.E."/>
            <person name="Richardson P."/>
        </authorList>
    </citation>
    <scope>NUCLEOTIDE SEQUENCE [LARGE SCALE GENOMIC DNA]</scope>
    <source>
        <strain>2CP-C</strain>
    </source>
</reference>
<protein>
    <recommendedName>
        <fullName evidence="2">Elongation factor Tu</fullName>
        <shortName evidence="2">EF-Tu</shortName>
        <ecNumber evidence="2">3.6.5.3</ecNumber>
    </recommendedName>
</protein>
<dbReference type="EC" id="3.6.5.3" evidence="2"/>
<dbReference type="EMBL" id="CP000251">
    <property type="protein sequence ID" value="ABC81357.1"/>
    <property type="molecule type" value="Genomic_DNA"/>
</dbReference>
<dbReference type="EMBL" id="CP000251">
    <property type="protein sequence ID" value="ABC81718.1"/>
    <property type="molecule type" value="Genomic_DNA"/>
</dbReference>
<dbReference type="RefSeq" id="WP_011420640.1">
    <property type="nucleotide sequence ID" value="NC_007760.1"/>
</dbReference>
<dbReference type="SMR" id="Q2II78"/>
<dbReference type="STRING" id="290397.Adeh_1584"/>
<dbReference type="KEGG" id="ade:Adeh_1584"/>
<dbReference type="KEGG" id="ade:Adeh_1947"/>
<dbReference type="eggNOG" id="COG0050">
    <property type="taxonomic scope" value="Bacteria"/>
</dbReference>
<dbReference type="HOGENOM" id="CLU_007265_0_0_7"/>
<dbReference type="OrthoDB" id="9803139at2"/>
<dbReference type="Proteomes" id="UP000001935">
    <property type="component" value="Chromosome"/>
</dbReference>
<dbReference type="GO" id="GO:0005829">
    <property type="term" value="C:cytosol"/>
    <property type="evidence" value="ECO:0007669"/>
    <property type="project" value="TreeGrafter"/>
</dbReference>
<dbReference type="GO" id="GO:0005525">
    <property type="term" value="F:GTP binding"/>
    <property type="evidence" value="ECO:0007669"/>
    <property type="project" value="UniProtKB-UniRule"/>
</dbReference>
<dbReference type="GO" id="GO:0003924">
    <property type="term" value="F:GTPase activity"/>
    <property type="evidence" value="ECO:0007669"/>
    <property type="project" value="InterPro"/>
</dbReference>
<dbReference type="GO" id="GO:0003746">
    <property type="term" value="F:translation elongation factor activity"/>
    <property type="evidence" value="ECO:0007669"/>
    <property type="project" value="UniProtKB-UniRule"/>
</dbReference>
<dbReference type="CDD" id="cd01884">
    <property type="entry name" value="EF_Tu"/>
    <property type="match status" value="1"/>
</dbReference>
<dbReference type="CDD" id="cd03697">
    <property type="entry name" value="EFTU_II"/>
    <property type="match status" value="1"/>
</dbReference>
<dbReference type="CDD" id="cd03707">
    <property type="entry name" value="EFTU_III"/>
    <property type="match status" value="1"/>
</dbReference>
<dbReference type="FunFam" id="2.40.30.10:FF:000001">
    <property type="entry name" value="Elongation factor Tu"/>
    <property type="match status" value="1"/>
</dbReference>
<dbReference type="FunFam" id="3.40.50.300:FF:000003">
    <property type="entry name" value="Elongation factor Tu"/>
    <property type="match status" value="1"/>
</dbReference>
<dbReference type="Gene3D" id="3.40.50.300">
    <property type="entry name" value="P-loop containing nucleotide triphosphate hydrolases"/>
    <property type="match status" value="1"/>
</dbReference>
<dbReference type="Gene3D" id="2.40.30.10">
    <property type="entry name" value="Translation factors"/>
    <property type="match status" value="2"/>
</dbReference>
<dbReference type="HAMAP" id="MF_00118_B">
    <property type="entry name" value="EF_Tu_B"/>
    <property type="match status" value="1"/>
</dbReference>
<dbReference type="InterPro" id="IPR041709">
    <property type="entry name" value="EF-Tu_GTP-bd"/>
</dbReference>
<dbReference type="InterPro" id="IPR050055">
    <property type="entry name" value="EF-Tu_GTPase"/>
</dbReference>
<dbReference type="InterPro" id="IPR004161">
    <property type="entry name" value="EFTu-like_2"/>
</dbReference>
<dbReference type="InterPro" id="IPR033720">
    <property type="entry name" value="EFTU_2"/>
</dbReference>
<dbReference type="InterPro" id="IPR031157">
    <property type="entry name" value="G_TR_CS"/>
</dbReference>
<dbReference type="InterPro" id="IPR027417">
    <property type="entry name" value="P-loop_NTPase"/>
</dbReference>
<dbReference type="InterPro" id="IPR005225">
    <property type="entry name" value="Small_GTP-bd"/>
</dbReference>
<dbReference type="InterPro" id="IPR000795">
    <property type="entry name" value="T_Tr_GTP-bd_dom"/>
</dbReference>
<dbReference type="InterPro" id="IPR009000">
    <property type="entry name" value="Transl_B-barrel_sf"/>
</dbReference>
<dbReference type="InterPro" id="IPR009001">
    <property type="entry name" value="Transl_elong_EF1A/Init_IF2_C"/>
</dbReference>
<dbReference type="InterPro" id="IPR004541">
    <property type="entry name" value="Transl_elong_EFTu/EF1A_bac/org"/>
</dbReference>
<dbReference type="InterPro" id="IPR004160">
    <property type="entry name" value="Transl_elong_EFTu/EF1A_C"/>
</dbReference>
<dbReference type="NCBIfam" id="TIGR00485">
    <property type="entry name" value="EF-Tu"/>
    <property type="match status" value="1"/>
</dbReference>
<dbReference type="NCBIfam" id="NF000766">
    <property type="entry name" value="PRK00049.1"/>
    <property type="match status" value="1"/>
</dbReference>
<dbReference type="NCBIfam" id="NF009372">
    <property type="entry name" value="PRK12735.1"/>
    <property type="match status" value="1"/>
</dbReference>
<dbReference type="NCBIfam" id="NF009373">
    <property type="entry name" value="PRK12736.1"/>
    <property type="match status" value="1"/>
</dbReference>
<dbReference type="NCBIfam" id="TIGR00231">
    <property type="entry name" value="small_GTP"/>
    <property type="match status" value="1"/>
</dbReference>
<dbReference type="PANTHER" id="PTHR43721:SF22">
    <property type="entry name" value="ELONGATION FACTOR TU, MITOCHONDRIAL"/>
    <property type="match status" value="1"/>
</dbReference>
<dbReference type="PANTHER" id="PTHR43721">
    <property type="entry name" value="ELONGATION FACTOR TU-RELATED"/>
    <property type="match status" value="1"/>
</dbReference>
<dbReference type="Pfam" id="PF00009">
    <property type="entry name" value="GTP_EFTU"/>
    <property type="match status" value="1"/>
</dbReference>
<dbReference type="Pfam" id="PF03144">
    <property type="entry name" value="GTP_EFTU_D2"/>
    <property type="match status" value="1"/>
</dbReference>
<dbReference type="Pfam" id="PF03143">
    <property type="entry name" value="GTP_EFTU_D3"/>
    <property type="match status" value="1"/>
</dbReference>
<dbReference type="PRINTS" id="PR00315">
    <property type="entry name" value="ELONGATNFCT"/>
</dbReference>
<dbReference type="SUPFAM" id="SSF50465">
    <property type="entry name" value="EF-Tu/eEF-1alpha/eIF2-gamma C-terminal domain"/>
    <property type="match status" value="1"/>
</dbReference>
<dbReference type="SUPFAM" id="SSF52540">
    <property type="entry name" value="P-loop containing nucleoside triphosphate hydrolases"/>
    <property type="match status" value="1"/>
</dbReference>
<dbReference type="SUPFAM" id="SSF50447">
    <property type="entry name" value="Translation proteins"/>
    <property type="match status" value="1"/>
</dbReference>
<dbReference type="PROSITE" id="PS00301">
    <property type="entry name" value="G_TR_1"/>
    <property type="match status" value="1"/>
</dbReference>
<dbReference type="PROSITE" id="PS51722">
    <property type="entry name" value="G_TR_2"/>
    <property type="match status" value="1"/>
</dbReference>
<gene>
    <name evidence="2" type="primary">tuf1</name>
    <name type="ordered locus">Adeh_1584</name>
</gene>
<gene>
    <name evidence="2" type="primary">tuf2</name>
    <name type="ordered locus">Adeh_1947</name>
</gene>
<organism>
    <name type="scientific">Anaeromyxobacter dehalogenans (strain 2CP-C)</name>
    <dbReference type="NCBI Taxonomy" id="290397"/>
    <lineage>
        <taxon>Bacteria</taxon>
        <taxon>Pseudomonadati</taxon>
        <taxon>Myxococcota</taxon>
        <taxon>Myxococcia</taxon>
        <taxon>Myxococcales</taxon>
        <taxon>Cystobacterineae</taxon>
        <taxon>Anaeromyxobacteraceae</taxon>
        <taxon>Anaeromyxobacter</taxon>
    </lineage>
</organism>
<sequence>MAKEKFERSKPHVNVGTIGHVDHGKTTLTAAITKVLAQKGGAQFLAYDQIDKAPEERERGITIATAHVEYQTEKRHYAHVDCPGHADYVKNMITGAAQMDGAILVVSAADGPMPQTREHILLARQVGVPYIVVFLNKVDMVDDKELLDLVELEVRELLSEYDFPGNEIPIVKGSALKALEGDKGELGEQAIFKLMEAVDAYIPTPQRATDKPFLMPVEDVFSISGRGTVATGRVERGIVKVGEEVEVVGLKATAKTVVTGVEMFRKLLDEGRAGDNIGALLRGLKREEVERGQVLAKPGSITPHTKFKAEVYVLTKEEGGRHTPFFNGYRPQFYFRTTDVTGSVQLPQGVEMVMPGDNIGMEVELITPIAMEKELRFAIREGGRTVGAGVVAEVIQ</sequence>
<keyword id="KW-0963">Cytoplasm</keyword>
<keyword id="KW-0251">Elongation factor</keyword>
<keyword id="KW-0342">GTP-binding</keyword>
<keyword id="KW-0378">Hydrolase</keyword>
<keyword id="KW-0460">Magnesium</keyword>
<keyword id="KW-0479">Metal-binding</keyword>
<keyword id="KW-0547">Nucleotide-binding</keyword>
<keyword id="KW-0648">Protein biosynthesis</keyword>
<keyword id="KW-1185">Reference proteome</keyword>
<proteinExistence type="inferred from homology"/>